<proteinExistence type="inferred from homology"/>
<sequence length="291" mass="32779">MGKRKELKDNDVEMGGTGRPVEDDESDEVMDIVNVDFEWFDPQPAVDFHGLKNLLRQLFDADSQIFDLSALTDLILAQPLLGSTVKVDGNESDPYAFLTVLNLQEHKDKPVIKDLTSYLQRKASSNPSLAPLSQLLSQSPIPPIGLILTERLINMPAEVVPPMYSMLLEEIAWAIEDKEPYNFSHYLIVSKTYEEVESKLDMEESRPQKKKKKSGSNVERFFFHPEDEVFERHAICSGSIEYTHKHDDGLSDSKRAFQDLGIKTSGSLILIDGPKLEAAVKDVTDYVKPPV</sequence>
<protein>
    <recommendedName>
        <fullName>Protein bcp1</fullName>
    </recommendedName>
</protein>
<feature type="chain" id="PRO_0000249696" description="Protein bcp1">
    <location>
        <begin position="1"/>
        <end position="291"/>
    </location>
</feature>
<feature type="region of interest" description="Disordered" evidence="3">
    <location>
        <begin position="1"/>
        <end position="25"/>
    </location>
</feature>
<feature type="compositionally biased region" description="Basic and acidic residues" evidence="3">
    <location>
        <begin position="1"/>
        <end position="11"/>
    </location>
</feature>
<organism>
    <name type="scientific">Aspergillus fumigatus (strain ATCC MYA-4609 / CBS 101355 / FGSC A1100 / Af293)</name>
    <name type="common">Neosartorya fumigata</name>
    <dbReference type="NCBI Taxonomy" id="330879"/>
    <lineage>
        <taxon>Eukaryota</taxon>
        <taxon>Fungi</taxon>
        <taxon>Dikarya</taxon>
        <taxon>Ascomycota</taxon>
        <taxon>Pezizomycotina</taxon>
        <taxon>Eurotiomycetes</taxon>
        <taxon>Eurotiomycetidae</taxon>
        <taxon>Eurotiales</taxon>
        <taxon>Aspergillaceae</taxon>
        <taxon>Aspergillus</taxon>
        <taxon>Aspergillus subgen. Fumigati</taxon>
    </lineage>
</organism>
<comment type="function">
    <text evidence="1">Involved in nuclear export, actin cytoskeleton organization and vesicular transport.</text>
</comment>
<comment type="subcellular location">
    <subcellularLocation>
        <location evidence="2">Cytoplasm</location>
    </subcellularLocation>
    <subcellularLocation>
        <location evidence="2">Nucleus</location>
    </subcellularLocation>
</comment>
<comment type="similarity">
    <text evidence="4">Belongs to the BCP1 family.</text>
</comment>
<comment type="sequence caution" evidence="4">
    <conflict type="erroneous gene model prediction">
        <sequence resource="EMBL-CDS" id="EAL91304"/>
    </conflict>
</comment>
<accession>Q4WVS2</accession>
<reference key="1">
    <citation type="journal article" date="2005" name="Nature">
        <title>Genomic sequence of the pathogenic and allergenic filamentous fungus Aspergillus fumigatus.</title>
        <authorList>
            <person name="Nierman W.C."/>
            <person name="Pain A."/>
            <person name="Anderson M.J."/>
            <person name="Wortman J.R."/>
            <person name="Kim H.S."/>
            <person name="Arroyo J."/>
            <person name="Berriman M."/>
            <person name="Abe K."/>
            <person name="Archer D.B."/>
            <person name="Bermejo C."/>
            <person name="Bennett J.W."/>
            <person name="Bowyer P."/>
            <person name="Chen D."/>
            <person name="Collins M."/>
            <person name="Coulsen R."/>
            <person name="Davies R."/>
            <person name="Dyer P.S."/>
            <person name="Farman M.L."/>
            <person name="Fedorova N."/>
            <person name="Fedorova N.D."/>
            <person name="Feldblyum T.V."/>
            <person name="Fischer R."/>
            <person name="Fosker N."/>
            <person name="Fraser A."/>
            <person name="Garcia J.L."/>
            <person name="Garcia M.J."/>
            <person name="Goble A."/>
            <person name="Goldman G.H."/>
            <person name="Gomi K."/>
            <person name="Griffith-Jones S."/>
            <person name="Gwilliam R."/>
            <person name="Haas B.J."/>
            <person name="Haas H."/>
            <person name="Harris D.E."/>
            <person name="Horiuchi H."/>
            <person name="Huang J."/>
            <person name="Humphray S."/>
            <person name="Jimenez J."/>
            <person name="Keller N."/>
            <person name="Khouri H."/>
            <person name="Kitamoto K."/>
            <person name="Kobayashi T."/>
            <person name="Konzack S."/>
            <person name="Kulkarni R."/>
            <person name="Kumagai T."/>
            <person name="Lafton A."/>
            <person name="Latge J.-P."/>
            <person name="Li W."/>
            <person name="Lord A."/>
            <person name="Lu C."/>
            <person name="Majoros W.H."/>
            <person name="May G.S."/>
            <person name="Miller B.L."/>
            <person name="Mohamoud Y."/>
            <person name="Molina M."/>
            <person name="Monod M."/>
            <person name="Mouyna I."/>
            <person name="Mulligan S."/>
            <person name="Murphy L.D."/>
            <person name="O'Neil S."/>
            <person name="Paulsen I."/>
            <person name="Penalva M.A."/>
            <person name="Pertea M."/>
            <person name="Price C."/>
            <person name="Pritchard B.L."/>
            <person name="Quail M.A."/>
            <person name="Rabbinowitsch E."/>
            <person name="Rawlins N."/>
            <person name="Rajandream M.A."/>
            <person name="Reichard U."/>
            <person name="Renauld H."/>
            <person name="Robson G.D."/>
            <person name="Rodriguez de Cordoba S."/>
            <person name="Rodriguez-Pena J.M."/>
            <person name="Ronning C.M."/>
            <person name="Rutter S."/>
            <person name="Salzberg S.L."/>
            <person name="Sanchez M."/>
            <person name="Sanchez-Ferrero J.C."/>
            <person name="Saunders D."/>
            <person name="Seeger K."/>
            <person name="Squares R."/>
            <person name="Squares S."/>
            <person name="Takeuchi M."/>
            <person name="Tekaia F."/>
            <person name="Turner G."/>
            <person name="Vazquez de Aldana C.R."/>
            <person name="Weidman J."/>
            <person name="White O."/>
            <person name="Woodward J.R."/>
            <person name="Yu J.-H."/>
            <person name="Fraser C.M."/>
            <person name="Galagan J.E."/>
            <person name="Asai K."/>
            <person name="Machida M."/>
            <person name="Hall N."/>
            <person name="Barrell B.G."/>
            <person name="Denning D.W."/>
        </authorList>
    </citation>
    <scope>NUCLEOTIDE SEQUENCE [LARGE SCALE GENOMIC DNA]</scope>
    <source>
        <strain>ATCC MYA-4609 / CBS 101355 / FGSC A1100 / Af293</strain>
    </source>
</reference>
<keyword id="KW-0963">Cytoplasm</keyword>
<keyword id="KW-0539">Nucleus</keyword>
<keyword id="KW-0653">Protein transport</keyword>
<keyword id="KW-1185">Reference proteome</keyword>
<keyword id="KW-0813">Transport</keyword>
<name>BCP1_ASPFU</name>
<dbReference type="EMBL" id="AAHF01000003">
    <property type="protein sequence ID" value="EAL91304.1"/>
    <property type="status" value="ALT_SEQ"/>
    <property type="molecule type" value="Genomic_DNA"/>
</dbReference>
<dbReference type="RefSeq" id="XP_753342.1">
    <property type="nucleotide sequence ID" value="XM_748249.1"/>
</dbReference>
<dbReference type="SMR" id="Q4WVS2"/>
<dbReference type="FunCoup" id="Q4WVS2">
    <property type="interactions" value="982"/>
</dbReference>
<dbReference type="STRING" id="330879.Q4WVS2"/>
<dbReference type="GeneID" id="3511498"/>
<dbReference type="KEGG" id="afm:AFUA_5G13120"/>
<dbReference type="eggNOG" id="KOG3034">
    <property type="taxonomic scope" value="Eukaryota"/>
</dbReference>
<dbReference type="HOGENOM" id="CLU_068770_2_0_1"/>
<dbReference type="InParanoid" id="Q4WVS2"/>
<dbReference type="OrthoDB" id="27543at2759"/>
<dbReference type="Proteomes" id="UP000002530">
    <property type="component" value="Chromosome 5"/>
</dbReference>
<dbReference type="GO" id="GO:0005737">
    <property type="term" value="C:cytoplasm"/>
    <property type="evidence" value="ECO:0007669"/>
    <property type="project" value="UniProtKB-SubCell"/>
</dbReference>
<dbReference type="GO" id="GO:0005634">
    <property type="term" value="C:nucleus"/>
    <property type="evidence" value="ECO:0000318"/>
    <property type="project" value="GO_Central"/>
</dbReference>
<dbReference type="GO" id="GO:0015031">
    <property type="term" value="P:protein transport"/>
    <property type="evidence" value="ECO:0007669"/>
    <property type="project" value="UniProtKB-KW"/>
</dbReference>
<dbReference type="InterPro" id="IPR025602">
    <property type="entry name" value="BCP1_family"/>
</dbReference>
<dbReference type="PANTHER" id="PTHR13261">
    <property type="entry name" value="BRCA2 AND CDKN1A INTERACTING PROTEIN"/>
    <property type="match status" value="1"/>
</dbReference>
<dbReference type="PANTHER" id="PTHR13261:SF0">
    <property type="entry name" value="BRCA2 AND CDKN1A-INTERACTING PROTEIN"/>
    <property type="match status" value="1"/>
</dbReference>
<dbReference type="Pfam" id="PF13862">
    <property type="entry name" value="BCCIP"/>
    <property type="match status" value="1"/>
</dbReference>
<dbReference type="PIRSF" id="PIRSF028983">
    <property type="entry name" value="BCP1"/>
    <property type="match status" value="1"/>
</dbReference>
<evidence type="ECO:0000250" key="1"/>
<evidence type="ECO:0000250" key="2">
    <source>
        <dbReference type="UniProtKB" id="Q06338"/>
    </source>
</evidence>
<evidence type="ECO:0000256" key="3">
    <source>
        <dbReference type="SAM" id="MobiDB-lite"/>
    </source>
</evidence>
<evidence type="ECO:0000305" key="4"/>
<gene>
    <name type="primary">bcp1</name>
    <name type="ORF">AFUA_5G13120</name>
</gene>